<keyword id="KW-1015">Disulfide bond</keyword>
<keyword id="KW-0255">Endonuclease</keyword>
<keyword id="KW-0378">Hydrolase</keyword>
<keyword id="KW-0456">Lyase</keyword>
<keyword id="KW-0540">Nuclease</keyword>
<keyword id="KW-0964">Secreted</keyword>
<keyword id="KW-0732">Signal</keyword>
<protein>
    <recommendedName>
        <fullName>Ribonuclease pancreatic</fullName>
        <ecNumber>4.6.1.18</ecNumber>
    </recommendedName>
    <alternativeName>
        <fullName>RNase 1</fullName>
    </alternativeName>
    <alternativeName>
        <fullName>RNase A</fullName>
    </alternativeName>
</protein>
<dbReference type="EC" id="4.6.1.18"/>
<dbReference type="EMBL" id="AJ005775">
    <property type="protein sequence ID" value="CAB41485.1"/>
    <property type="molecule type" value="Genomic_DNA"/>
</dbReference>
<dbReference type="SMR" id="Q9WUX4"/>
<dbReference type="GO" id="GO:0005576">
    <property type="term" value="C:extracellular region"/>
    <property type="evidence" value="ECO:0007669"/>
    <property type="project" value="UniProtKB-SubCell"/>
</dbReference>
<dbReference type="GO" id="GO:0016829">
    <property type="term" value="F:lyase activity"/>
    <property type="evidence" value="ECO:0007669"/>
    <property type="project" value="UniProtKB-KW"/>
</dbReference>
<dbReference type="GO" id="GO:0003676">
    <property type="term" value="F:nucleic acid binding"/>
    <property type="evidence" value="ECO:0007669"/>
    <property type="project" value="InterPro"/>
</dbReference>
<dbReference type="GO" id="GO:0004522">
    <property type="term" value="F:ribonuclease A activity"/>
    <property type="evidence" value="ECO:0007669"/>
    <property type="project" value="UniProtKB-EC"/>
</dbReference>
<dbReference type="GO" id="GO:0050830">
    <property type="term" value="P:defense response to Gram-positive bacterium"/>
    <property type="evidence" value="ECO:0007669"/>
    <property type="project" value="TreeGrafter"/>
</dbReference>
<dbReference type="CDD" id="cd06265">
    <property type="entry name" value="RNase_A_canonical"/>
    <property type="match status" value="1"/>
</dbReference>
<dbReference type="FunFam" id="3.10.130.10:FF:000001">
    <property type="entry name" value="Ribonuclease pancreatic"/>
    <property type="match status" value="1"/>
</dbReference>
<dbReference type="Gene3D" id="3.10.130.10">
    <property type="entry name" value="Ribonuclease A-like domain"/>
    <property type="match status" value="1"/>
</dbReference>
<dbReference type="InterPro" id="IPR001427">
    <property type="entry name" value="RNaseA"/>
</dbReference>
<dbReference type="InterPro" id="IPR036816">
    <property type="entry name" value="RNaseA-like_dom_sf"/>
</dbReference>
<dbReference type="InterPro" id="IPR023411">
    <property type="entry name" value="RNaseA_AS"/>
</dbReference>
<dbReference type="InterPro" id="IPR023412">
    <property type="entry name" value="RNaseA_domain"/>
</dbReference>
<dbReference type="PANTHER" id="PTHR11437">
    <property type="entry name" value="RIBONUCLEASE"/>
    <property type="match status" value="1"/>
</dbReference>
<dbReference type="PANTHER" id="PTHR11437:SF24">
    <property type="entry name" value="RIBONUCLEASE PANCREATIC"/>
    <property type="match status" value="1"/>
</dbReference>
<dbReference type="Pfam" id="PF00074">
    <property type="entry name" value="RnaseA"/>
    <property type="match status" value="1"/>
</dbReference>
<dbReference type="PRINTS" id="PR00794">
    <property type="entry name" value="RIBONUCLEASE"/>
</dbReference>
<dbReference type="SMART" id="SM00092">
    <property type="entry name" value="RNAse_Pc"/>
    <property type="match status" value="1"/>
</dbReference>
<dbReference type="SUPFAM" id="SSF54076">
    <property type="entry name" value="RNase A-like"/>
    <property type="match status" value="1"/>
</dbReference>
<dbReference type="PROSITE" id="PS00127">
    <property type="entry name" value="RNASE_PANCREATIC"/>
    <property type="match status" value="1"/>
</dbReference>
<feature type="signal peptide" evidence="2">
    <location>
        <begin position="1"/>
        <end position="25"/>
    </location>
</feature>
<feature type="chain" id="PRO_0000030944" description="Ribonuclease pancreatic">
    <location>
        <begin position="26"/>
        <end position="148"/>
    </location>
</feature>
<feature type="active site" description="Proton acceptor" evidence="1">
    <location>
        <position position="37"/>
    </location>
</feature>
<feature type="active site" description="Proton donor" evidence="1">
    <location>
        <position position="143"/>
    </location>
</feature>
<feature type="binding site" evidence="1">
    <location>
        <position position="32"/>
    </location>
    <ligand>
        <name>substrate</name>
    </ligand>
</feature>
<feature type="binding site" evidence="1">
    <location>
        <position position="35"/>
    </location>
    <ligand>
        <name>substrate</name>
    </ligand>
</feature>
<feature type="binding site" evidence="1">
    <location>
        <begin position="65"/>
        <end position="69"/>
    </location>
    <ligand>
        <name>substrate</name>
    </ligand>
</feature>
<feature type="binding site" evidence="1">
    <location>
        <position position="90"/>
    </location>
    <ligand>
        <name>substrate</name>
    </ligand>
</feature>
<feature type="binding site" evidence="1">
    <location>
        <position position="109"/>
    </location>
    <ligand>
        <name>substrate</name>
    </ligand>
</feature>
<feature type="disulfide bond" evidence="1">
    <location>
        <begin position="50"/>
        <end position="108"/>
    </location>
</feature>
<feature type="disulfide bond" evidence="1">
    <location>
        <begin position="64"/>
        <end position="119"/>
    </location>
</feature>
<feature type="disulfide bond" evidence="1">
    <location>
        <begin position="82"/>
        <end position="134"/>
    </location>
</feature>
<feature type="disulfide bond" evidence="1">
    <location>
        <begin position="89"/>
        <end position="96"/>
    </location>
</feature>
<gene>
    <name type="primary">RNASE1</name>
</gene>
<sequence>MGLEKSLMLFPLLVLVLGLVQPSLGRESSAMKFERQHMDSAGTGSSPTYCNQMMMRREMTNGSCKPVNTFVHEPLAHVHAACSQKNVTCKNGKGNCYKSSSALHITDCRLKGNSKYPNCDYQTSNYQKRIIVACEGNPYVPVHLDASV</sequence>
<name>RNAS1_GERGM</name>
<comment type="function">
    <text evidence="1">Endonuclease that catalyzes the cleavage of RNA on the 3' side of pyrimidine nucleotides. Acts on single-stranded and double-stranded RNA (By similarity).</text>
</comment>
<comment type="catalytic activity">
    <reaction>
        <text>an [RNA] containing cytidine + H2O = an [RNA]-3'-cytidine-3'-phosphate + a 5'-hydroxy-ribonucleotide-3'-[RNA].</text>
        <dbReference type="EC" id="4.6.1.18"/>
    </reaction>
</comment>
<comment type="catalytic activity">
    <reaction>
        <text>an [RNA] containing uridine + H2O = an [RNA]-3'-uridine-3'-phosphate + a 5'-hydroxy-ribonucleotide-3'-[RNA].</text>
        <dbReference type="EC" id="4.6.1.18"/>
    </reaction>
</comment>
<comment type="subunit">
    <text evidence="1">Monomer. Interacts with and forms tight 1:1 complexes with RNH1. Dimerization of two such complexes may occur. Interaction with RNH1 inhibits this protein (By similarity).</text>
</comment>
<comment type="subcellular location">
    <subcellularLocation>
        <location>Secreted</location>
    </subcellularLocation>
</comment>
<comment type="tissue specificity">
    <text>Pancreas.</text>
</comment>
<comment type="similarity">
    <text evidence="3">Belongs to the pancreatic ribonuclease family.</text>
</comment>
<evidence type="ECO:0000250" key="1"/>
<evidence type="ECO:0000255" key="2"/>
<evidence type="ECO:0000305" key="3"/>
<proteinExistence type="evidence at transcript level"/>
<accession>Q9WUX4</accession>
<organism>
    <name type="scientific">Gerbilliscus gambianus</name>
    <name type="common">Gambian gerbil</name>
    <name type="synonym">Gerbilliscus kempi gambiana</name>
    <dbReference type="NCBI Taxonomy" id="41264"/>
    <lineage>
        <taxon>Eukaryota</taxon>
        <taxon>Metazoa</taxon>
        <taxon>Chordata</taxon>
        <taxon>Craniata</taxon>
        <taxon>Vertebrata</taxon>
        <taxon>Euteleostomi</taxon>
        <taxon>Mammalia</taxon>
        <taxon>Eutheria</taxon>
        <taxon>Euarchontoglires</taxon>
        <taxon>Glires</taxon>
        <taxon>Rodentia</taxon>
        <taxon>Myomorpha</taxon>
        <taxon>Muroidea</taxon>
        <taxon>Muridae</taxon>
        <taxon>Gerbillinae</taxon>
        <taxon>Gerbilliscus</taxon>
    </lineage>
</organism>
<reference key="1">
    <citation type="journal article" date="1999" name="Mol. Phylogenet. Evol.">
        <title>The phylogenetic position of 'Acomyinae' (Rodentia, Mammalia) as sister group of a Murinae + Gerbillinae clade: evidence from the nuclear ribonuclease gene.</title>
        <authorList>
            <person name="Dubois J.-Y.F."/>
            <person name="Catzeflis F.M."/>
            <person name="Beintema J.J."/>
        </authorList>
    </citation>
    <scope>NUCLEOTIDE SEQUENCE [GENOMIC DNA]</scope>
</reference>